<sequence>MPMLNAQQFLNQFSLEAPLDESLYPIIRDICQEVKVHGDKALKMYNLTFDHTKTDHLEISHEQIKAAFDTLDEKTKQALQQSYERIKAYQESIKQTNQQLEESVECYEIYHPLESVGIYVPGGKASYPSTVLMTATLAQVAGVENIVVVTPPQPNGVSQEVLAACYITQVDQVFQVGGAQSIAALTYGTETIPKVDKIVGPGNQFVAYAKKYLFGQVGIDQIAGPTEIALIIDETADLDAIVYDVFAQAEHDELARTYAISEDAQVLKDLESRIAKALPNVDRYDIVSKSIANQHYLIHASNFDEACHVMNTIAPEHASIQTVNPQPYIEKVKYVGALFIGHYSPEVIGDYVAGPSHVLPTNRTARFTNGLSVNDFLTRNTVIHLSKDTFEQIADSAQHIAHVEALYNHQQSILIRQS</sequence>
<name>HISX_STAAC</name>
<accession>Q5HCL9</accession>
<gene>
    <name evidence="1" type="primary">hisD</name>
    <name type="ordered locus">SACOL2702</name>
</gene>
<reference key="1">
    <citation type="journal article" date="2005" name="J. Bacteriol.">
        <title>Insights on evolution of virulence and resistance from the complete genome analysis of an early methicillin-resistant Staphylococcus aureus strain and a biofilm-producing methicillin-resistant Staphylococcus epidermidis strain.</title>
        <authorList>
            <person name="Gill S.R."/>
            <person name="Fouts D.E."/>
            <person name="Archer G.L."/>
            <person name="Mongodin E.F."/>
            <person name="DeBoy R.T."/>
            <person name="Ravel J."/>
            <person name="Paulsen I.T."/>
            <person name="Kolonay J.F."/>
            <person name="Brinkac L.M."/>
            <person name="Beanan M.J."/>
            <person name="Dodson R.J."/>
            <person name="Daugherty S.C."/>
            <person name="Madupu R."/>
            <person name="Angiuoli S.V."/>
            <person name="Durkin A.S."/>
            <person name="Haft D.H."/>
            <person name="Vamathevan J.J."/>
            <person name="Khouri H."/>
            <person name="Utterback T.R."/>
            <person name="Lee C."/>
            <person name="Dimitrov G."/>
            <person name="Jiang L."/>
            <person name="Qin H."/>
            <person name="Weidman J."/>
            <person name="Tran K."/>
            <person name="Kang K.H."/>
            <person name="Hance I.R."/>
            <person name="Nelson K.E."/>
            <person name="Fraser C.M."/>
        </authorList>
    </citation>
    <scope>NUCLEOTIDE SEQUENCE [LARGE SCALE GENOMIC DNA]</scope>
    <source>
        <strain>COL</strain>
    </source>
</reference>
<evidence type="ECO:0000255" key="1">
    <source>
        <dbReference type="HAMAP-Rule" id="MF_01024"/>
    </source>
</evidence>
<proteinExistence type="inferred from homology"/>
<keyword id="KW-0028">Amino-acid biosynthesis</keyword>
<keyword id="KW-0368">Histidine biosynthesis</keyword>
<keyword id="KW-0479">Metal-binding</keyword>
<keyword id="KW-0520">NAD</keyword>
<keyword id="KW-0560">Oxidoreductase</keyword>
<keyword id="KW-0862">Zinc</keyword>
<feature type="chain" id="PRO_0000135849" description="Histidinol dehydrogenase">
    <location>
        <begin position="1"/>
        <end position="418"/>
    </location>
</feature>
<feature type="active site" description="Proton acceptor" evidence="1">
    <location>
        <position position="316"/>
    </location>
</feature>
<feature type="active site" description="Proton acceptor" evidence="1">
    <location>
        <position position="317"/>
    </location>
</feature>
<feature type="binding site" evidence="1">
    <location>
        <position position="119"/>
    </location>
    <ligand>
        <name>NAD(+)</name>
        <dbReference type="ChEBI" id="CHEBI:57540"/>
    </ligand>
</feature>
<feature type="binding site" evidence="1">
    <location>
        <position position="180"/>
    </location>
    <ligand>
        <name>NAD(+)</name>
        <dbReference type="ChEBI" id="CHEBI:57540"/>
    </ligand>
</feature>
<feature type="binding site" evidence="1">
    <location>
        <position position="203"/>
    </location>
    <ligand>
        <name>NAD(+)</name>
        <dbReference type="ChEBI" id="CHEBI:57540"/>
    </ligand>
</feature>
<feature type="binding site" evidence="1">
    <location>
        <position position="226"/>
    </location>
    <ligand>
        <name>substrate</name>
    </ligand>
</feature>
<feature type="binding site" evidence="1">
    <location>
        <position position="248"/>
    </location>
    <ligand>
        <name>substrate</name>
    </ligand>
</feature>
<feature type="binding site" evidence="1">
    <location>
        <position position="248"/>
    </location>
    <ligand>
        <name>Zn(2+)</name>
        <dbReference type="ChEBI" id="CHEBI:29105"/>
    </ligand>
</feature>
<feature type="binding site" evidence="1">
    <location>
        <position position="251"/>
    </location>
    <ligand>
        <name>substrate</name>
    </ligand>
</feature>
<feature type="binding site" evidence="1">
    <location>
        <position position="251"/>
    </location>
    <ligand>
        <name>Zn(2+)</name>
        <dbReference type="ChEBI" id="CHEBI:29105"/>
    </ligand>
</feature>
<feature type="binding site" evidence="1">
    <location>
        <position position="317"/>
    </location>
    <ligand>
        <name>substrate</name>
    </ligand>
</feature>
<feature type="binding site" evidence="1">
    <location>
        <position position="350"/>
    </location>
    <ligand>
        <name>substrate</name>
    </ligand>
</feature>
<feature type="binding site" evidence="1">
    <location>
        <position position="350"/>
    </location>
    <ligand>
        <name>Zn(2+)</name>
        <dbReference type="ChEBI" id="CHEBI:29105"/>
    </ligand>
</feature>
<feature type="binding site" evidence="1">
    <location>
        <position position="404"/>
    </location>
    <ligand>
        <name>substrate</name>
    </ligand>
</feature>
<feature type="binding site" evidence="1">
    <location>
        <position position="409"/>
    </location>
    <ligand>
        <name>substrate</name>
    </ligand>
</feature>
<feature type="binding site" evidence="1">
    <location>
        <position position="409"/>
    </location>
    <ligand>
        <name>Zn(2+)</name>
        <dbReference type="ChEBI" id="CHEBI:29105"/>
    </ligand>
</feature>
<dbReference type="EC" id="1.1.1.23" evidence="1"/>
<dbReference type="EMBL" id="CP000046">
    <property type="protein sequence ID" value="AAW37350.1"/>
    <property type="molecule type" value="Genomic_DNA"/>
</dbReference>
<dbReference type="SMR" id="Q5HCL9"/>
<dbReference type="KEGG" id="sac:SACOL2702"/>
<dbReference type="HOGENOM" id="CLU_006732_3_3_9"/>
<dbReference type="UniPathway" id="UPA00031">
    <property type="reaction ID" value="UER00014"/>
</dbReference>
<dbReference type="Proteomes" id="UP000000530">
    <property type="component" value="Chromosome"/>
</dbReference>
<dbReference type="GO" id="GO:0005829">
    <property type="term" value="C:cytosol"/>
    <property type="evidence" value="ECO:0007669"/>
    <property type="project" value="TreeGrafter"/>
</dbReference>
<dbReference type="GO" id="GO:0004399">
    <property type="term" value="F:histidinol dehydrogenase activity"/>
    <property type="evidence" value="ECO:0007669"/>
    <property type="project" value="UniProtKB-UniRule"/>
</dbReference>
<dbReference type="GO" id="GO:0051287">
    <property type="term" value="F:NAD binding"/>
    <property type="evidence" value="ECO:0007669"/>
    <property type="project" value="InterPro"/>
</dbReference>
<dbReference type="GO" id="GO:0008270">
    <property type="term" value="F:zinc ion binding"/>
    <property type="evidence" value="ECO:0007669"/>
    <property type="project" value="UniProtKB-UniRule"/>
</dbReference>
<dbReference type="GO" id="GO:0000105">
    <property type="term" value="P:L-histidine biosynthetic process"/>
    <property type="evidence" value="ECO:0007669"/>
    <property type="project" value="UniProtKB-UniRule"/>
</dbReference>
<dbReference type="CDD" id="cd06572">
    <property type="entry name" value="Histidinol_dh"/>
    <property type="match status" value="1"/>
</dbReference>
<dbReference type="FunFam" id="3.40.50.1980:FF:000001">
    <property type="entry name" value="Histidinol dehydrogenase"/>
    <property type="match status" value="1"/>
</dbReference>
<dbReference type="FunFam" id="3.40.50.1980:FF:000026">
    <property type="entry name" value="Histidinol dehydrogenase"/>
    <property type="match status" value="1"/>
</dbReference>
<dbReference type="Gene3D" id="1.20.5.1300">
    <property type="match status" value="1"/>
</dbReference>
<dbReference type="Gene3D" id="3.40.50.1980">
    <property type="entry name" value="Nitrogenase molybdenum iron protein domain"/>
    <property type="match status" value="2"/>
</dbReference>
<dbReference type="HAMAP" id="MF_01024">
    <property type="entry name" value="HisD"/>
    <property type="match status" value="1"/>
</dbReference>
<dbReference type="InterPro" id="IPR016161">
    <property type="entry name" value="Ald_DH/histidinol_DH"/>
</dbReference>
<dbReference type="InterPro" id="IPR001692">
    <property type="entry name" value="Histidinol_DH_CS"/>
</dbReference>
<dbReference type="InterPro" id="IPR022695">
    <property type="entry name" value="Histidinol_DH_monofunct"/>
</dbReference>
<dbReference type="InterPro" id="IPR012131">
    <property type="entry name" value="Hstdl_DH"/>
</dbReference>
<dbReference type="NCBIfam" id="TIGR00069">
    <property type="entry name" value="hisD"/>
    <property type="match status" value="1"/>
</dbReference>
<dbReference type="NCBIfam" id="NF010343">
    <property type="entry name" value="PRK13770.1"/>
    <property type="match status" value="1"/>
</dbReference>
<dbReference type="PANTHER" id="PTHR21256:SF2">
    <property type="entry name" value="HISTIDINE BIOSYNTHESIS TRIFUNCTIONAL PROTEIN"/>
    <property type="match status" value="1"/>
</dbReference>
<dbReference type="PANTHER" id="PTHR21256">
    <property type="entry name" value="HISTIDINOL DEHYDROGENASE HDH"/>
    <property type="match status" value="1"/>
</dbReference>
<dbReference type="Pfam" id="PF00815">
    <property type="entry name" value="Histidinol_dh"/>
    <property type="match status" value="1"/>
</dbReference>
<dbReference type="PIRSF" id="PIRSF000099">
    <property type="entry name" value="Histidinol_dh"/>
    <property type="match status" value="1"/>
</dbReference>
<dbReference type="PRINTS" id="PR00083">
    <property type="entry name" value="HOLDHDRGNASE"/>
</dbReference>
<dbReference type="SUPFAM" id="SSF53720">
    <property type="entry name" value="ALDH-like"/>
    <property type="match status" value="1"/>
</dbReference>
<dbReference type="PROSITE" id="PS00611">
    <property type="entry name" value="HISOL_DEHYDROGENASE"/>
    <property type="match status" value="1"/>
</dbReference>
<comment type="function">
    <text evidence="1">Catalyzes the sequential NAD-dependent oxidations of L-histidinol to L-histidinaldehyde and then to L-histidine.</text>
</comment>
<comment type="catalytic activity">
    <reaction evidence="1">
        <text>L-histidinol + 2 NAD(+) + H2O = L-histidine + 2 NADH + 3 H(+)</text>
        <dbReference type="Rhea" id="RHEA:20641"/>
        <dbReference type="ChEBI" id="CHEBI:15377"/>
        <dbReference type="ChEBI" id="CHEBI:15378"/>
        <dbReference type="ChEBI" id="CHEBI:57540"/>
        <dbReference type="ChEBI" id="CHEBI:57595"/>
        <dbReference type="ChEBI" id="CHEBI:57699"/>
        <dbReference type="ChEBI" id="CHEBI:57945"/>
        <dbReference type="EC" id="1.1.1.23"/>
    </reaction>
</comment>
<comment type="cofactor">
    <cofactor evidence="1">
        <name>Zn(2+)</name>
        <dbReference type="ChEBI" id="CHEBI:29105"/>
    </cofactor>
    <text evidence="1">Binds 1 zinc ion per subunit.</text>
</comment>
<comment type="pathway">
    <text evidence="1">Amino-acid biosynthesis; L-histidine biosynthesis; L-histidine from 5-phospho-alpha-D-ribose 1-diphosphate: step 9/9.</text>
</comment>
<comment type="similarity">
    <text evidence="1">Belongs to the histidinol dehydrogenase family.</text>
</comment>
<organism>
    <name type="scientific">Staphylococcus aureus (strain COL)</name>
    <dbReference type="NCBI Taxonomy" id="93062"/>
    <lineage>
        <taxon>Bacteria</taxon>
        <taxon>Bacillati</taxon>
        <taxon>Bacillota</taxon>
        <taxon>Bacilli</taxon>
        <taxon>Bacillales</taxon>
        <taxon>Staphylococcaceae</taxon>
        <taxon>Staphylococcus</taxon>
    </lineage>
</organism>
<protein>
    <recommendedName>
        <fullName evidence="1">Histidinol dehydrogenase</fullName>
        <shortName evidence="1">HDH</shortName>
        <ecNumber evidence="1">1.1.1.23</ecNumber>
    </recommendedName>
</protein>